<protein>
    <recommendedName>
        <fullName evidence="6">PMA1 stabilization in the Golgi protein 1</fullName>
    </recommendedName>
    <component>
        <recommendedName>
            <fullName evidence="6">PSG1-N'</fullName>
        </recommendedName>
    </component>
    <component>
        <recommendedName>
            <fullName evidence="6">PSG1-C'</fullName>
        </recommendedName>
    </component>
</protein>
<dbReference type="EMBL" id="Z28077">
    <property type="protein sequence ID" value="CAA81914.1"/>
    <property type="molecule type" value="Genomic_DNA"/>
</dbReference>
<dbReference type="EMBL" id="BK006944">
    <property type="protein sequence ID" value="DAA09080.1"/>
    <property type="molecule type" value="Genomic_DNA"/>
</dbReference>
<dbReference type="PIR" id="S37902">
    <property type="entry name" value="S37902"/>
</dbReference>
<dbReference type="RefSeq" id="NP_012846.1">
    <property type="nucleotide sequence ID" value="NM_001179643.1"/>
</dbReference>
<dbReference type="BioGRID" id="34055">
    <property type="interactions" value="246"/>
</dbReference>
<dbReference type="DIP" id="DIP-5003N"/>
<dbReference type="FunCoup" id="P36081">
    <property type="interactions" value="169"/>
</dbReference>
<dbReference type="IntAct" id="P36081">
    <property type="interactions" value="28"/>
</dbReference>
<dbReference type="STRING" id="4932.YKL077W"/>
<dbReference type="GlyCosmos" id="P36081">
    <property type="glycosylation" value="31 sites, No reported glycans"/>
</dbReference>
<dbReference type="GlyGen" id="P36081">
    <property type="glycosylation" value="31 sites"/>
</dbReference>
<dbReference type="iPTMnet" id="P36081"/>
<dbReference type="PaxDb" id="4932-YKL077W"/>
<dbReference type="PeptideAtlas" id="P36081"/>
<dbReference type="TopDownProteomics" id="P36081"/>
<dbReference type="EnsemblFungi" id="YKL077W_mRNA">
    <property type="protein sequence ID" value="YKL077W"/>
    <property type="gene ID" value="YKL077W"/>
</dbReference>
<dbReference type="GeneID" id="853785"/>
<dbReference type="KEGG" id="sce:YKL077W"/>
<dbReference type="AGR" id="SGD:S000001560"/>
<dbReference type="SGD" id="S000001560">
    <property type="gene designation" value="PSG1"/>
</dbReference>
<dbReference type="VEuPathDB" id="FungiDB:YKL077W"/>
<dbReference type="eggNOG" id="ENOG502QVDR">
    <property type="taxonomic scope" value="Eukaryota"/>
</dbReference>
<dbReference type="HOGENOM" id="CLU_041040_0_0_1"/>
<dbReference type="InParanoid" id="P36081"/>
<dbReference type="OMA" id="RCTPDRY"/>
<dbReference type="OrthoDB" id="4084551at2759"/>
<dbReference type="BioCyc" id="YEAST:G3O-31872-MONOMER"/>
<dbReference type="BioGRID-ORCS" id="853785">
    <property type="hits" value="4 hits in 10 CRISPR screens"/>
</dbReference>
<dbReference type="PRO" id="PR:P36081"/>
<dbReference type="Proteomes" id="UP000002311">
    <property type="component" value="Chromosome XI"/>
</dbReference>
<dbReference type="RNAct" id="P36081">
    <property type="molecule type" value="protein"/>
</dbReference>
<dbReference type="GO" id="GO:0030663">
    <property type="term" value="C:COPI-coated vesicle membrane"/>
    <property type="evidence" value="ECO:0007669"/>
    <property type="project" value="UniProtKB-SubCell"/>
</dbReference>
<dbReference type="GO" id="GO:0005783">
    <property type="term" value="C:endoplasmic reticulum"/>
    <property type="evidence" value="ECO:0007005"/>
    <property type="project" value="SGD"/>
</dbReference>
<dbReference type="GO" id="GO:0005794">
    <property type="term" value="C:Golgi apparatus"/>
    <property type="evidence" value="ECO:0000314"/>
    <property type="project" value="SGD"/>
</dbReference>
<dbReference type="GO" id="GO:0005796">
    <property type="term" value="C:Golgi lumen"/>
    <property type="evidence" value="ECO:0007669"/>
    <property type="project" value="UniProtKB-SubCell"/>
</dbReference>
<dbReference type="GO" id="GO:0051604">
    <property type="term" value="P:protein maturation"/>
    <property type="evidence" value="ECO:0000315"/>
    <property type="project" value="SGD"/>
</dbReference>
<dbReference type="GO" id="GO:0006605">
    <property type="term" value="P:protein targeting"/>
    <property type="evidence" value="ECO:0000315"/>
    <property type="project" value="SGD"/>
</dbReference>
<dbReference type="InterPro" id="IPR028000">
    <property type="entry name" value="Pma1"/>
</dbReference>
<dbReference type="Pfam" id="PF14610">
    <property type="entry name" value="Psg1"/>
    <property type="match status" value="1"/>
</dbReference>
<name>PSG1_YEAST</name>
<feature type="signal peptide" evidence="1">
    <location>
        <begin position="1"/>
        <end position="22"/>
    </location>
</feature>
<feature type="chain" id="PRO_0000203168" description="PMA1 stabilization in the Golgi protein 1">
    <location>
        <begin position="23"/>
        <end position="392"/>
    </location>
</feature>
<feature type="chain" id="PRO_0000448535" description="PSG1-N'" evidence="5">
    <location>
        <begin position="23"/>
        <end position="229"/>
    </location>
</feature>
<feature type="chain" id="PRO_0000448536" description="PSG1-C'" evidence="5">
    <location>
        <begin position="230"/>
        <end position="392"/>
    </location>
</feature>
<feature type="topological domain" description="Lumenal" evidence="7">
    <location>
        <begin position="230"/>
        <end position="317"/>
    </location>
</feature>
<feature type="transmembrane region" description="Helical" evidence="1">
    <location>
        <begin position="318"/>
        <end position="338"/>
    </location>
</feature>
<feature type="topological domain" description="Cytoplasmic" evidence="7">
    <location>
        <begin position="339"/>
        <end position="392"/>
    </location>
</feature>
<feature type="site" description="Cleavage; by KEX2" evidence="3 5">
    <location>
        <begin position="229"/>
        <end position="230"/>
    </location>
</feature>
<feature type="glycosylation site" description="O-linked (Man) threonine" evidence="4">
    <location>
        <position position="34"/>
    </location>
</feature>
<feature type="glycosylation site" description="O-linked (Man) threonine" evidence="4">
    <location>
        <position position="35"/>
    </location>
</feature>
<feature type="glycosylation site" description="O-linked (Man) serine" evidence="4">
    <location>
        <position position="36"/>
    </location>
</feature>
<feature type="glycosylation site" description="O-linked (Man) threonine" evidence="4">
    <location>
        <position position="45"/>
    </location>
</feature>
<feature type="glycosylation site" description="O-linked (Man) serine" evidence="4">
    <location>
        <position position="49"/>
    </location>
</feature>
<feature type="glycosylation site" description="O-linked (Man) threonine" evidence="4">
    <location>
        <position position="55"/>
    </location>
</feature>
<feature type="glycosylation site" description="O-linked (Man) threonine" evidence="4">
    <location>
        <position position="57"/>
    </location>
</feature>
<feature type="glycosylation site" description="O-linked (Man) threonine" evidence="4">
    <location>
        <position position="63"/>
    </location>
</feature>
<feature type="glycosylation site" description="O-linked (Man) serine" evidence="4">
    <location>
        <position position="65"/>
    </location>
</feature>
<feature type="glycosylation site" description="O-linked (Man) threonine" evidence="4">
    <location>
        <position position="71"/>
    </location>
</feature>
<feature type="glycosylation site" description="O-linked (Man) serine" evidence="4">
    <location>
        <position position="80"/>
    </location>
</feature>
<feature type="glycosylation site" description="O-linked (Man) threonine" evidence="4">
    <location>
        <position position="89"/>
    </location>
</feature>
<feature type="glycosylation site" description="O-linked (Man) threonine" evidence="4">
    <location>
        <position position="99"/>
    </location>
</feature>
<feature type="glycosylation site" description="O-linked (Man) serine" evidence="4">
    <location>
        <position position="107"/>
    </location>
</feature>
<feature type="glycosylation site" description="O-linked (Man) threonine" evidence="4">
    <location>
        <position position="108"/>
    </location>
</feature>
<feature type="glycosylation site" description="O-linked (Man) threonine" evidence="4">
    <location>
        <position position="112"/>
    </location>
</feature>
<feature type="glycosylation site" description="O-linked (Man) serine" evidence="4">
    <location>
        <position position="114"/>
    </location>
</feature>
<feature type="glycosylation site" description="O-linked (Man) serine" evidence="4">
    <location>
        <position position="115"/>
    </location>
</feature>
<feature type="glycosylation site" description="O-linked (Man) threonine" evidence="4">
    <location>
        <position position="117"/>
    </location>
</feature>
<feature type="glycosylation site" description="O-linked (Man) serine" evidence="4">
    <location>
        <position position="119"/>
    </location>
</feature>
<feature type="glycosylation site" description="O-linked (Man) serine" evidence="4">
    <location>
        <position position="148"/>
    </location>
</feature>
<feature type="glycosylation site" description="O-linked (Man) threonine" evidence="4">
    <location>
        <position position="156"/>
    </location>
</feature>
<feature type="glycosylation site" description="O-linked (Man) serine" evidence="4">
    <location>
        <position position="171"/>
    </location>
</feature>
<feature type="glycosylation site" description="O-linked (Man) threonine" evidence="4">
    <location>
        <position position="176"/>
    </location>
</feature>
<feature type="glycosylation site" description="O-linked (Man) serine" evidence="4">
    <location>
        <position position="181"/>
    </location>
</feature>
<feature type="glycosylation site" description="O-linked (Man) threonine" evidence="4">
    <location>
        <position position="188"/>
    </location>
</feature>
<feature type="glycosylation site" description="O-linked (Man) threonine" evidence="4">
    <location>
        <position position="192"/>
    </location>
</feature>
<feature type="glycosylation site" description="O-linked (Man) threonine" evidence="4">
    <location>
        <position position="195"/>
    </location>
</feature>
<feature type="glycosylation site" description="O-linked (Man) threonine" evidence="4">
    <location>
        <position position="199"/>
    </location>
</feature>
<feature type="glycosylation site" description="O-linked (Man) serine" evidence="4">
    <location>
        <position position="203"/>
    </location>
</feature>
<feature type="glycosylation site" description="O-linked (Man) serine" evidence="4">
    <location>
        <position position="215"/>
    </location>
</feature>
<organism>
    <name type="scientific">Saccharomyces cerevisiae (strain ATCC 204508 / S288c)</name>
    <name type="common">Baker's yeast</name>
    <dbReference type="NCBI Taxonomy" id="559292"/>
    <lineage>
        <taxon>Eukaryota</taxon>
        <taxon>Fungi</taxon>
        <taxon>Dikarya</taxon>
        <taxon>Ascomycota</taxon>
        <taxon>Saccharomycotina</taxon>
        <taxon>Saccharomycetes</taxon>
        <taxon>Saccharomycetales</taxon>
        <taxon>Saccharomycetaceae</taxon>
        <taxon>Saccharomyces</taxon>
    </lineage>
</organism>
<reference key="1">
    <citation type="journal article" date="1994" name="Nature">
        <title>Complete DNA sequence of yeast chromosome XI.</title>
        <authorList>
            <person name="Dujon B."/>
            <person name="Alexandraki D."/>
            <person name="Andre B."/>
            <person name="Ansorge W."/>
            <person name="Baladron V."/>
            <person name="Ballesta J.P.G."/>
            <person name="Banrevi A."/>
            <person name="Bolle P.-A."/>
            <person name="Bolotin-Fukuhara M."/>
            <person name="Bossier P."/>
            <person name="Bou G."/>
            <person name="Boyer J."/>
            <person name="Buitrago M.J."/>
            <person name="Cheret G."/>
            <person name="Colleaux L."/>
            <person name="Daignan-Fornier B."/>
            <person name="del Rey F."/>
            <person name="Dion C."/>
            <person name="Domdey H."/>
            <person name="Duesterhoeft A."/>
            <person name="Duesterhus S."/>
            <person name="Entian K.-D."/>
            <person name="Erfle H."/>
            <person name="Esteban P.F."/>
            <person name="Feldmann H."/>
            <person name="Fernandes L."/>
            <person name="Fobo G.M."/>
            <person name="Fritz C."/>
            <person name="Fukuhara H."/>
            <person name="Gabel C."/>
            <person name="Gaillon L."/>
            <person name="Garcia-Cantalejo J.M."/>
            <person name="Garcia-Ramirez J.J."/>
            <person name="Gent M.E."/>
            <person name="Ghazvini M."/>
            <person name="Goffeau A."/>
            <person name="Gonzalez A."/>
            <person name="Grothues D."/>
            <person name="Guerreiro P."/>
            <person name="Hegemann J.H."/>
            <person name="Hewitt N."/>
            <person name="Hilger F."/>
            <person name="Hollenberg C.P."/>
            <person name="Horaitis O."/>
            <person name="Indge K.J."/>
            <person name="Jacquier A."/>
            <person name="James C.M."/>
            <person name="Jauniaux J.-C."/>
            <person name="Jimenez A."/>
            <person name="Keuchel H."/>
            <person name="Kirchrath L."/>
            <person name="Kleine K."/>
            <person name="Koetter P."/>
            <person name="Legrain P."/>
            <person name="Liebl S."/>
            <person name="Louis E.J."/>
            <person name="Maia e Silva A."/>
            <person name="Marck C."/>
            <person name="Monnier A.-L."/>
            <person name="Moestl D."/>
            <person name="Mueller S."/>
            <person name="Obermaier B."/>
            <person name="Oliver S.G."/>
            <person name="Pallier C."/>
            <person name="Pascolo S."/>
            <person name="Pfeiffer F."/>
            <person name="Philippsen P."/>
            <person name="Planta R.J."/>
            <person name="Pohl F.M."/>
            <person name="Pohl T.M."/>
            <person name="Poehlmann R."/>
            <person name="Portetelle D."/>
            <person name="Purnelle B."/>
            <person name="Puzos V."/>
            <person name="Ramezani Rad M."/>
            <person name="Rasmussen S.W."/>
            <person name="Remacha M.A."/>
            <person name="Revuelta J.L."/>
            <person name="Richard G.-F."/>
            <person name="Rieger M."/>
            <person name="Rodrigues-Pousada C."/>
            <person name="Rose M."/>
            <person name="Rupp T."/>
            <person name="Santos M.A."/>
            <person name="Schwager C."/>
            <person name="Sensen C."/>
            <person name="Skala J."/>
            <person name="Soares H."/>
            <person name="Sor F."/>
            <person name="Stegemann J."/>
            <person name="Tettelin H."/>
            <person name="Thierry A."/>
            <person name="Tzermia M."/>
            <person name="Urrestarazu L.A."/>
            <person name="van Dyck L."/>
            <person name="van Vliet-Reedijk J.C."/>
            <person name="Valens M."/>
            <person name="Vandenbol M."/>
            <person name="Vilela C."/>
            <person name="Vissers S."/>
            <person name="von Wettstein D."/>
            <person name="Voss H."/>
            <person name="Wiemann S."/>
            <person name="Xu G."/>
            <person name="Zimmermann J."/>
            <person name="Haasemann M."/>
            <person name="Becker I."/>
            <person name="Mewes H.-W."/>
        </authorList>
    </citation>
    <scope>NUCLEOTIDE SEQUENCE [LARGE SCALE GENOMIC DNA]</scope>
    <source>
        <strain>ATCC 204508 / S288c</strain>
    </source>
</reference>
<reference key="2">
    <citation type="journal article" date="2014" name="G3 (Bethesda)">
        <title>The reference genome sequence of Saccharomyces cerevisiae: Then and now.</title>
        <authorList>
            <person name="Engel S.R."/>
            <person name="Dietrich F.S."/>
            <person name="Fisk D.G."/>
            <person name="Binkley G."/>
            <person name="Balakrishnan R."/>
            <person name="Costanzo M.C."/>
            <person name="Dwight S.S."/>
            <person name="Hitz B.C."/>
            <person name="Karra K."/>
            <person name="Nash R.S."/>
            <person name="Weng S."/>
            <person name="Wong E.D."/>
            <person name="Lloyd P."/>
            <person name="Skrzypek M.S."/>
            <person name="Miyasato S.R."/>
            <person name="Simison M."/>
            <person name="Cherry J.M."/>
        </authorList>
    </citation>
    <scope>GENOME REANNOTATION</scope>
    <source>
        <strain>ATCC 204508 / S288c</strain>
    </source>
</reference>
<reference key="3">
    <citation type="journal article" date="2003" name="Nature">
        <title>Global analysis of protein expression in yeast.</title>
        <authorList>
            <person name="Ghaemmaghami S."/>
            <person name="Huh W.-K."/>
            <person name="Bower K."/>
            <person name="Howson R.W."/>
            <person name="Belle A."/>
            <person name="Dephoure N."/>
            <person name="O'Shea E.K."/>
            <person name="Weissman J.S."/>
        </authorList>
    </citation>
    <scope>LEVEL OF PROTEIN EXPRESSION [LARGE SCALE ANALYSIS]</scope>
</reference>
<reference key="4">
    <citation type="journal article" date="2007" name="J. Cell Biol.">
        <title>The Golgi-resident protease Kex2 acts in conjunction with Prm1 to facilitate cell fusion during yeast mating.</title>
        <authorList>
            <person name="Heiman M.G."/>
            <person name="Engel A."/>
            <person name="Walter P."/>
        </authorList>
    </citation>
    <scope>CLEAVAGE BY KEX2</scope>
</reference>
<reference key="5">
    <citation type="journal article" date="2016" name="Mol. Cell. Proteomics">
        <title>Mapping the O-Mannose Glycoproteome in Saccharomyces cerevisiae.</title>
        <authorList>
            <person name="Neubert P."/>
            <person name="Halim A."/>
            <person name="Zauser M."/>
            <person name="Essig A."/>
            <person name="Joshi H.J."/>
            <person name="Zatorska E."/>
            <person name="Larsen I.S."/>
            <person name="Loibl M."/>
            <person name="Castells-Ballester J."/>
            <person name="Aebi M."/>
            <person name="Clausen H."/>
            <person name="Strahl S."/>
        </authorList>
    </citation>
    <scope>GLYCOSYLATION AT THR-34; THR-35; SER-36; THR-45; SER-49; THR-55; THR-57; THR-63; SER-65; THR-71; SER-80; THR-89; THR-99; SER-107; THR-108; THR-112; SER-114; SER-115; THR-117; SER-119; SER-148; THR-156; SER-171; THR-176; SER-181; THR-188; THR-192; THR-195; THR-199; SER-203 AND SER-215</scope>
</reference>
<reference key="6">
    <citation type="journal article" date="2017" name="Traffic">
        <title>Two novel effectors of trafficking and maturation of the yeast plasma membrane H+ -ATPase.</title>
        <authorList>
            <person name="Geva Y."/>
            <person name="Crissman J."/>
            <person name="Arakel E.C."/>
            <person name="Gomez-Navarro N."/>
            <person name="Chuartzman S.G."/>
            <person name="Stahmer K.R."/>
            <person name="Schwappach B."/>
            <person name="Miller E.A."/>
            <person name="Schuldiner M."/>
        </authorList>
    </citation>
    <scope>SUBCELLULAR LOCATION</scope>
    <scope>INTERACTION WITH PSG1; EPS1; CDC48; UBX2; SSM4; TLG1; TLG2 AND VTI1</scope>
    <scope>DISRUPTION PHENOTYPE</scope>
    <scope>TOPOLOGY</scope>
    <scope>CLEAVAGE BY KEX2</scope>
    <scope>GLYCOSYLATION</scope>
</reference>
<sequence>MRFHDSILIFFSLASLYQHVHGARQVVRPKEKMTTSEEVKPWLRTVYGSQKELVTPTVIAGVTFSEKPEETPNPLKPWVSLEHDGRPKTIKPEINKGRTKKGRPDYSTYFKTVSSHTYSYEELKAHNMGPNEVFVEEEYIDEDDTYVSLNPIVRCTPNLYFNKGLAKDIRSEPFCTPYENSRWKVDKTYFVTWYTRFFTDENSGKVADKVRVHLSYVKENPVEKGNYKRDIPATFFSSEWIDNDNGLMPVEVRDEWLQDQFDRRIVVSVQPIYISDEDFDPLQYGILLYITKGSKVFKPTKEQLALDDAGITNDQWYYVALSIPTVVVVFFVFMYFFLYVNGKNRDFTDVTRKALNKKRRVLGKFSEMKKFKNMKNHKYTELPSYKKTSKQN</sequence>
<comment type="function">
    <text evidence="5 7">With EXP1, the specific cargo receptor protein for the plasma membrane ATPase PMA1, is involved in the transport and/or maturation of PMA1 (PubMed:28727280). EXP1 and PSG1 probably act sequentially to promote PMA1 sorting between the ER and the Golgi, with EXP1 promoting PMA1 export from the ER to the Golgi while PSG1 has a role in PMA1 maturation or quality control in the Golgi (PubMed:28727280). PSG1 might also couple PMA1 sorting and maturation in the early secretory pathway with the glycosylation machinery (Probable).</text>
</comment>
<comment type="function">
    <text evidence="5">PSG1 is cleaved by KEX2 in two stable peptides, PSG1-N' and PSG1-C', the former supporting a role in maturation quality control, the latter having a role in modulating vesicular trafficking.</text>
</comment>
<comment type="subunit">
    <text evidence="5">Interacts with EXP1 (PubMed:28727280). PSG1-N' interacts with ERAD-related proteins involved in PMA1 quality control including EPS1, CDC48, UBX2 and SSM4 (PubMed:28727280). PSG1-C' interacts with the TLG1/2 SNARE complex proteins TLG1, TLG2 and VTI1 (PubMed:28727280).</text>
</comment>
<comment type="subcellular location">
    <molecule>PSG1-N'</molecule>
    <subcellularLocation>
        <location evidence="5">Golgi apparatus lumen</location>
    </subcellularLocation>
</comment>
<comment type="subcellular location">
    <molecule>PSG1-C'</molecule>
    <subcellularLocation>
        <location evidence="5">Cytoplasmic vesicle</location>
        <location evidence="5">COPI-coated vesicle membrane</location>
        <topology evidence="1">Single-pass membrane protein</topology>
    </subcellularLocation>
</comment>
<comment type="PTM">
    <text evidence="3 5">The precursor protein is cleaved into two polypeptide chains, PSG1-N' and PSG1-C'. The cleavage is performed in the Golgi apparatus by Ca(+)-dependent serine protease KEX2 between Arg-229 and Asp-230.</text>
</comment>
<comment type="PTM">
    <text evidence="4 5">PSG1-N' is highly O-mannosylated.</text>
</comment>
<comment type="disruption phenotype">
    <text evidence="5">Leads to enhanced degradation of PMA1 in the vacuole.</text>
</comment>
<comment type="miscellaneous">
    <text evidence="2">Present with 606 molecules/cell in log phase SD medium.</text>
</comment>
<evidence type="ECO:0000255" key="1"/>
<evidence type="ECO:0000269" key="2">
    <source>
    </source>
</evidence>
<evidence type="ECO:0000269" key="3">
    <source>
    </source>
</evidence>
<evidence type="ECO:0000269" key="4">
    <source>
    </source>
</evidence>
<evidence type="ECO:0000269" key="5">
    <source>
    </source>
</evidence>
<evidence type="ECO:0000303" key="6">
    <source>
    </source>
</evidence>
<evidence type="ECO:0000305" key="7">
    <source>
    </source>
</evidence>
<proteinExistence type="evidence at protein level"/>
<accession>P36081</accession>
<accession>D6VXL0</accession>
<keyword id="KW-0968">Cytoplasmic vesicle</keyword>
<keyword id="KW-0325">Glycoprotein</keyword>
<keyword id="KW-0333">Golgi apparatus</keyword>
<keyword id="KW-0472">Membrane</keyword>
<keyword id="KW-1185">Reference proteome</keyword>
<keyword id="KW-0732">Signal</keyword>
<keyword id="KW-0812">Transmembrane</keyword>
<keyword id="KW-1133">Transmembrane helix</keyword>
<gene>
    <name evidence="6" type="primary">PSG1</name>
    <name type="ordered locus">YKL077W</name>
</gene>